<reference key="1">
    <citation type="submission" date="2006-09" db="EMBL/GenBank/DDBJ databases">
        <title>Complete sequence of Rhodopseudomonas palustris BisA53.</title>
        <authorList>
            <consortium name="US DOE Joint Genome Institute"/>
            <person name="Copeland A."/>
            <person name="Lucas S."/>
            <person name="Lapidus A."/>
            <person name="Barry K."/>
            <person name="Detter J.C."/>
            <person name="Glavina del Rio T."/>
            <person name="Hammon N."/>
            <person name="Israni S."/>
            <person name="Dalin E."/>
            <person name="Tice H."/>
            <person name="Pitluck S."/>
            <person name="Chain P."/>
            <person name="Malfatti S."/>
            <person name="Shin M."/>
            <person name="Vergez L."/>
            <person name="Schmutz J."/>
            <person name="Larimer F."/>
            <person name="Land M."/>
            <person name="Hauser L."/>
            <person name="Pelletier D.A."/>
            <person name="Kyrpides N."/>
            <person name="Kim E."/>
            <person name="Harwood C.S."/>
            <person name="Oda Y."/>
            <person name="Richardson P."/>
        </authorList>
    </citation>
    <scope>NUCLEOTIDE SEQUENCE [LARGE SCALE GENOMIC DNA]</scope>
    <source>
        <strain>BisA53</strain>
    </source>
</reference>
<proteinExistence type="inferred from homology"/>
<organism>
    <name type="scientific">Rhodopseudomonas palustris (strain BisA53)</name>
    <dbReference type="NCBI Taxonomy" id="316055"/>
    <lineage>
        <taxon>Bacteria</taxon>
        <taxon>Pseudomonadati</taxon>
        <taxon>Pseudomonadota</taxon>
        <taxon>Alphaproteobacteria</taxon>
        <taxon>Hyphomicrobiales</taxon>
        <taxon>Nitrobacteraceae</taxon>
        <taxon>Rhodopseudomonas</taxon>
    </lineage>
</organism>
<protein>
    <recommendedName>
        <fullName evidence="1">LexA repressor</fullName>
        <ecNumber evidence="1">3.4.21.88</ecNumber>
    </recommendedName>
</protein>
<evidence type="ECO:0000255" key="1">
    <source>
        <dbReference type="HAMAP-Rule" id="MF_00015"/>
    </source>
</evidence>
<keyword id="KW-0068">Autocatalytic cleavage</keyword>
<keyword id="KW-0227">DNA damage</keyword>
<keyword id="KW-0234">DNA repair</keyword>
<keyword id="KW-0235">DNA replication</keyword>
<keyword id="KW-0238">DNA-binding</keyword>
<keyword id="KW-0378">Hydrolase</keyword>
<keyword id="KW-0678">Repressor</keyword>
<keyword id="KW-0742">SOS response</keyword>
<keyword id="KW-0804">Transcription</keyword>
<keyword id="KW-0805">Transcription regulation</keyword>
<sequence length="237" mass="26196">MLTRKQFELLRFINERLKEAGVPPSFDEMKDALDLRSKSGIHRLITALEERGFIRRLPNRARAIEVIKLPEFGINGGGQTRRGFTPSVIEGHLGKVRPHASIGSDEDSHDRNVAVPVMGRIAAGTPIEALQTRSHTISVPPDMLGSGEHYALEVRGDSMVDAGILDGDMALIQKNESADTGDIVVALIDEEEATLKRFRRRGASIALEPANSAYEVRILPPNRVRIQGKLVGLYRKY</sequence>
<gene>
    <name evidence="1" type="primary">lexA</name>
    <name type="ordered locus">RPE_2571</name>
</gene>
<name>LEXA_RHOP5</name>
<accession>Q07NH5</accession>
<feature type="chain" id="PRO_1000001326" description="LexA repressor">
    <location>
        <begin position="1"/>
        <end position="237"/>
    </location>
</feature>
<feature type="DNA-binding region" description="H-T-H motif" evidence="1">
    <location>
        <begin position="26"/>
        <end position="46"/>
    </location>
</feature>
<feature type="active site" description="For autocatalytic cleavage activity" evidence="1">
    <location>
        <position position="158"/>
    </location>
</feature>
<feature type="active site" description="For autocatalytic cleavage activity" evidence="1">
    <location>
        <position position="196"/>
    </location>
</feature>
<feature type="site" description="Cleavage; by autolysis" evidence="1">
    <location>
        <begin position="123"/>
        <end position="124"/>
    </location>
</feature>
<comment type="function">
    <text evidence="1">Represses a number of genes involved in the response to DNA damage (SOS response), including recA and lexA. In the presence of single-stranded DNA, RecA interacts with LexA causing an autocatalytic cleavage which disrupts the DNA-binding part of LexA, leading to derepression of the SOS regulon and eventually DNA repair.</text>
</comment>
<comment type="catalytic activity">
    <reaction evidence="1">
        <text>Hydrolysis of Ala-|-Gly bond in repressor LexA.</text>
        <dbReference type="EC" id="3.4.21.88"/>
    </reaction>
</comment>
<comment type="subunit">
    <text evidence="1">Homodimer.</text>
</comment>
<comment type="similarity">
    <text evidence="1">Belongs to the peptidase S24 family.</text>
</comment>
<dbReference type="EC" id="3.4.21.88" evidence="1"/>
<dbReference type="EMBL" id="CP000463">
    <property type="protein sequence ID" value="ABJ06509.1"/>
    <property type="molecule type" value="Genomic_DNA"/>
</dbReference>
<dbReference type="SMR" id="Q07NH5"/>
<dbReference type="STRING" id="316055.RPE_2571"/>
<dbReference type="MEROPS" id="S24.001"/>
<dbReference type="KEGG" id="rpe:RPE_2571"/>
<dbReference type="eggNOG" id="COG1974">
    <property type="taxonomic scope" value="Bacteria"/>
</dbReference>
<dbReference type="HOGENOM" id="CLU_066192_45_2_5"/>
<dbReference type="OrthoDB" id="9802364at2"/>
<dbReference type="GO" id="GO:0003677">
    <property type="term" value="F:DNA binding"/>
    <property type="evidence" value="ECO:0007669"/>
    <property type="project" value="UniProtKB-UniRule"/>
</dbReference>
<dbReference type="GO" id="GO:0004252">
    <property type="term" value="F:serine-type endopeptidase activity"/>
    <property type="evidence" value="ECO:0007669"/>
    <property type="project" value="UniProtKB-UniRule"/>
</dbReference>
<dbReference type="GO" id="GO:0006281">
    <property type="term" value="P:DNA repair"/>
    <property type="evidence" value="ECO:0007669"/>
    <property type="project" value="UniProtKB-UniRule"/>
</dbReference>
<dbReference type="GO" id="GO:0006260">
    <property type="term" value="P:DNA replication"/>
    <property type="evidence" value="ECO:0007669"/>
    <property type="project" value="UniProtKB-UniRule"/>
</dbReference>
<dbReference type="GO" id="GO:0045892">
    <property type="term" value="P:negative regulation of DNA-templated transcription"/>
    <property type="evidence" value="ECO:0007669"/>
    <property type="project" value="UniProtKB-UniRule"/>
</dbReference>
<dbReference type="GO" id="GO:0006508">
    <property type="term" value="P:proteolysis"/>
    <property type="evidence" value="ECO:0007669"/>
    <property type="project" value="InterPro"/>
</dbReference>
<dbReference type="GO" id="GO:0009432">
    <property type="term" value="P:SOS response"/>
    <property type="evidence" value="ECO:0007669"/>
    <property type="project" value="UniProtKB-UniRule"/>
</dbReference>
<dbReference type="CDD" id="cd06529">
    <property type="entry name" value="S24_LexA-like"/>
    <property type="match status" value="1"/>
</dbReference>
<dbReference type="FunFam" id="1.10.10.10:FF:000102">
    <property type="entry name" value="LexA repressor"/>
    <property type="match status" value="1"/>
</dbReference>
<dbReference type="FunFam" id="2.10.109.10:FF:000001">
    <property type="entry name" value="LexA repressor"/>
    <property type="match status" value="1"/>
</dbReference>
<dbReference type="Gene3D" id="2.10.109.10">
    <property type="entry name" value="Umud Fragment, subunit A"/>
    <property type="match status" value="1"/>
</dbReference>
<dbReference type="Gene3D" id="1.10.10.10">
    <property type="entry name" value="Winged helix-like DNA-binding domain superfamily/Winged helix DNA-binding domain"/>
    <property type="match status" value="1"/>
</dbReference>
<dbReference type="HAMAP" id="MF_00015">
    <property type="entry name" value="LexA"/>
    <property type="match status" value="1"/>
</dbReference>
<dbReference type="InterPro" id="IPR006200">
    <property type="entry name" value="LexA"/>
</dbReference>
<dbReference type="InterPro" id="IPR039418">
    <property type="entry name" value="LexA-like"/>
</dbReference>
<dbReference type="InterPro" id="IPR036286">
    <property type="entry name" value="LexA/Signal_pep-like_sf"/>
</dbReference>
<dbReference type="InterPro" id="IPR006199">
    <property type="entry name" value="LexA_DNA-bd_dom"/>
</dbReference>
<dbReference type="InterPro" id="IPR050077">
    <property type="entry name" value="LexA_repressor"/>
</dbReference>
<dbReference type="InterPro" id="IPR006197">
    <property type="entry name" value="Peptidase_S24_LexA"/>
</dbReference>
<dbReference type="InterPro" id="IPR015927">
    <property type="entry name" value="Peptidase_S24_S26A/B/C"/>
</dbReference>
<dbReference type="InterPro" id="IPR036388">
    <property type="entry name" value="WH-like_DNA-bd_sf"/>
</dbReference>
<dbReference type="InterPro" id="IPR036390">
    <property type="entry name" value="WH_DNA-bd_sf"/>
</dbReference>
<dbReference type="NCBIfam" id="TIGR00498">
    <property type="entry name" value="lexA"/>
    <property type="match status" value="1"/>
</dbReference>
<dbReference type="PANTHER" id="PTHR33516">
    <property type="entry name" value="LEXA REPRESSOR"/>
    <property type="match status" value="1"/>
</dbReference>
<dbReference type="PANTHER" id="PTHR33516:SF2">
    <property type="entry name" value="LEXA REPRESSOR-RELATED"/>
    <property type="match status" value="1"/>
</dbReference>
<dbReference type="Pfam" id="PF01726">
    <property type="entry name" value="LexA_DNA_bind"/>
    <property type="match status" value="1"/>
</dbReference>
<dbReference type="Pfam" id="PF00717">
    <property type="entry name" value="Peptidase_S24"/>
    <property type="match status" value="1"/>
</dbReference>
<dbReference type="PRINTS" id="PR00726">
    <property type="entry name" value="LEXASERPTASE"/>
</dbReference>
<dbReference type="SUPFAM" id="SSF51306">
    <property type="entry name" value="LexA/Signal peptidase"/>
    <property type="match status" value="1"/>
</dbReference>
<dbReference type="SUPFAM" id="SSF46785">
    <property type="entry name" value="Winged helix' DNA-binding domain"/>
    <property type="match status" value="1"/>
</dbReference>